<name>DDL_SHEPC</name>
<protein>
    <recommendedName>
        <fullName evidence="2">D-alanine--D-alanine ligase</fullName>
        <ecNumber evidence="2">6.3.2.4</ecNumber>
    </recommendedName>
    <alternativeName>
        <fullName evidence="2">D-Ala-D-Ala ligase</fullName>
    </alternativeName>
    <alternativeName>
        <fullName evidence="2">D-alanylalanine synthetase</fullName>
    </alternativeName>
</protein>
<sequence length="337" mass="37658">MSRINLLLLCGGGSAEHDISLMSANYFESSLAKSDQFSVLRVELDKLGQYRTAAGDDCELTNNREIRFRDETKAPWPVDYVIPCIHGYPGETGDIQSYFNLIQLPYFGCESEASSNCFNKITAKMWFSALGIPNTPYIFLHQYDDEAISQAQTALANWGSIFIKAASQGSSVGCYKVDDSSKVAQVLKDAFGYAPYVVVEKTIKARELEVAVYEYNGEIVATLPGEIICDTNTFYTFDEKYAKSSKARTDVVAKDVSVELSEQIRAYAIKAFKGMKLRHLSRIDFFLTAENEILLNEINTFPGSTPISMFPKMLQNHGHDFTEYLSLVINSQLSAKD</sequence>
<proteinExistence type="inferred from homology"/>
<organism>
    <name type="scientific">Shewanella putrefaciens (strain CN-32 / ATCC BAA-453)</name>
    <dbReference type="NCBI Taxonomy" id="319224"/>
    <lineage>
        <taxon>Bacteria</taxon>
        <taxon>Pseudomonadati</taxon>
        <taxon>Pseudomonadota</taxon>
        <taxon>Gammaproteobacteria</taxon>
        <taxon>Alteromonadales</taxon>
        <taxon>Shewanellaceae</taxon>
        <taxon>Shewanella</taxon>
    </lineage>
</organism>
<comment type="function">
    <text evidence="2">Cell wall formation.</text>
</comment>
<comment type="catalytic activity">
    <reaction evidence="2">
        <text>2 D-alanine + ATP = D-alanyl-D-alanine + ADP + phosphate + H(+)</text>
        <dbReference type="Rhea" id="RHEA:11224"/>
        <dbReference type="ChEBI" id="CHEBI:15378"/>
        <dbReference type="ChEBI" id="CHEBI:30616"/>
        <dbReference type="ChEBI" id="CHEBI:43474"/>
        <dbReference type="ChEBI" id="CHEBI:57416"/>
        <dbReference type="ChEBI" id="CHEBI:57822"/>
        <dbReference type="ChEBI" id="CHEBI:456216"/>
        <dbReference type="EC" id="6.3.2.4"/>
    </reaction>
</comment>
<comment type="cofactor">
    <cofactor evidence="1">
        <name>Mg(2+)</name>
        <dbReference type="ChEBI" id="CHEBI:18420"/>
    </cofactor>
    <cofactor evidence="1">
        <name>Mn(2+)</name>
        <dbReference type="ChEBI" id="CHEBI:29035"/>
    </cofactor>
    <text evidence="1">Binds 2 magnesium or manganese ions per subunit.</text>
</comment>
<comment type="pathway">
    <text evidence="2">Cell wall biogenesis; peptidoglycan biosynthesis.</text>
</comment>
<comment type="subcellular location">
    <subcellularLocation>
        <location evidence="2">Cytoplasm</location>
    </subcellularLocation>
</comment>
<comment type="similarity">
    <text evidence="2">Belongs to the D-alanine--D-alanine ligase family.</text>
</comment>
<accession>A4Y6E2</accession>
<keyword id="KW-0067">ATP-binding</keyword>
<keyword id="KW-0133">Cell shape</keyword>
<keyword id="KW-0961">Cell wall biogenesis/degradation</keyword>
<keyword id="KW-0963">Cytoplasm</keyword>
<keyword id="KW-0436">Ligase</keyword>
<keyword id="KW-0460">Magnesium</keyword>
<keyword id="KW-0464">Manganese</keyword>
<keyword id="KW-0479">Metal-binding</keyword>
<keyword id="KW-0547">Nucleotide-binding</keyword>
<keyword id="KW-0573">Peptidoglycan synthesis</keyword>
<evidence type="ECO:0000250" key="1"/>
<evidence type="ECO:0000255" key="2">
    <source>
        <dbReference type="HAMAP-Rule" id="MF_00047"/>
    </source>
</evidence>
<dbReference type="EC" id="6.3.2.4" evidence="2"/>
<dbReference type="EMBL" id="CP000681">
    <property type="protein sequence ID" value="ABP75525.1"/>
    <property type="molecule type" value="Genomic_DNA"/>
</dbReference>
<dbReference type="SMR" id="A4Y6E2"/>
<dbReference type="STRING" id="319224.Sputcn32_1801"/>
<dbReference type="KEGG" id="spc:Sputcn32_1801"/>
<dbReference type="eggNOG" id="COG1181">
    <property type="taxonomic scope" value="Bacteria"/>
</dbReference>
<dbReference type="HOGENOM" id="CLU_039268_0_0_6"/>
<dbReference type="UniPathway" id="UPA00219"/>
<dbReference type="GO" id="GO:0005829">
    <property type="term" value="C:cytosol"/>
    <property type="evidence" value="ECO:0007669"/>
    <property type="project" value="TreeGrafter"/>
</dbReference>
<dbReference type="GO" id="GO:0005524">
    <property type="term" value="F:ATP binding"/>
    <property type="evidence" value="ECO:0007669"/>
    <property type="project" value="UniProtKB-KW"/>
</dbReference>
<dbReference type="GO" id="GO:0008716">
    <property type="term" value="F:D-alanine-D-alanine ligase activity"/>
    <property type="evidence" value="ECO:0007669"/>
    <property type="project" value="UniProtKB-UniRule"/>
</dbReference>
<dbReference type="GO" id="GO:0046872">
    <property type="term" value="F:metal ion binding"/>
    <property type="evidence" value="ECO:0007669"/>
    <property type="project" value="UniProtKB-KW"/>
</dbReference>
<dbReference type="GO" id="GO:0071555">
    <property type="term" value="P:cell wall organization"/>
    <property type="evidence" value="ECO:0007669"/>
    <property type="project" value="UniProtKB-KW"/>
</dbReference>
<dbReference type="GO" id="GO:0009252">
    <property type="term" value="P:peptidoglycan biosynthetic process"/>
    <property type="evidence" value="ECO:0007669"/>
    <property type="project" value="UniProtKB-UniRule"/>
</dbReference>
<dbReference type="GO" id="GO:0008360">
    <property type="term" value="P:regulation of cell shape"/>
    <property type="evidence" value="ECO:0007669"/>
    <property type="project" value="UniProtKB-KW"/>
</dbReference>
<dbReference type="FunFam" id="3.40.50.20:FF:000034">
    <property type="entry name" value="D-alanine--D-alanine ligase"/>
    <property type="match status" value="1"/>
</dbReference>
<dbReference type="Gene3D" id="3.40.50.20">
    <property type="match status" value="1"/>
</dbReference>
<dbReference type="Gene3D" id="3.30.1490.20">
    <property type="entry name" value="ATP-grasp fold, A domain"/>
    <property type="match status" value="1"/>
</dbReference>
<dbReference type="Gene3D" id="3.30.470.20">
    <property type="entry name" value="ATP-grasp fold, B domain"/>
    <property type="match status" value="1"/>
</dbReference>
<dbReference type="HAMAP" id="MF_00047">
    <property type="entry name" value="Dala_Dala_lig"/>
    <property type="match status" value="1"/>
</dbReference>
<dbReference type="InterPro" id="IPR011761">
    <property type="entry name" value="ATP-grasp"/>
</dbReference>
<dbReference type="InterPro" id="IPR013815">
    <property type="entry name" value="ATP_grasp_subdomain_1"/>
</dbReference>
<dbReference type="InterPro" id="IPR000291">
    <property type="entry name" value="D-Ala_lig_Van_CS"/>
</dbReference>
<dbReference type="InterPro" id="IPR005905">
    <property type="entry name" value="D_ala_D_ala"/>
</dbReference>
<dbReference type="InterPro" id="IPR011095">
    <property type="entry name" value="Dala_Dala_lig_C"/>
</dbReference>
<dbReference type="InterPro" id="IPR011127">
    <property type="entry name" value="Dala_Dala_lig_N"/>
</dbReference>
<dbReference type="InterPro" id="IPR016185">
    <property type="entry name" value="PreATP-grasp_dom_sf"/>
</dbReference>
<dbReference type="NCBIfam" id="TIGR01205">
    <property type="entry name" value="D_ala_D_alaTIGR"/>
    <property type="match status" value="1"/>
</dbReference>
<dbReference type="NCBIfam" id="NF002527">
    <property type="entry name" value="PRK01966.1-3"/>
    <property type="match status" value="1"/>
</dbReference>
<dbReference type="NCBIfam" id="NF002528">
    <property type="entry name" value="PRK01966.1-4"/>
    <property type="match status" value="1"/>
</dbReference>
<dbReference type="PANTHER" id="PTHR23132">
    <property type="entry name" value="D-ALANINE--D-ALANINE LIGASE"/>
    <property type="match status" value="1"/>
</dbReference>
<dbReference type="PANTHER" id="PTHR23132:SF25">
    <property type="entry name" value="D-ALANINE--D-ALANINE LIGASE A"/>
    <property type="match status" value="1"/>
</dbReference>
<dbReference type="Pfam" id="PF07478">
    <property type="entry name" value="Dala_Dala_lig_C"/>
    <property type="match status" value="1"/>
</dbReference>
<dbReference type="Pfam" id="PF01820">
    <property type="entry name" value="Dala_Dala_lig_N"/>
    <property type="match status" value="1"/>
</dbReference>
<dbReference type="PIRSF" id="PIRSF039102">
    <property type="entry name" value="Ddl/VanB"/>
    <property type="match status" value="1"/>
</dbReference>
<dbReference type="SUPFAM" id="SSF56059">
    <property type="entry name" value="Glutathione synthetase ATP-binding domain-like"/>
    <property type="match status" value="1"/>
</dbReference>
<dbReference type="SUPFAM" id="SSF52440">
    <property type="entry name" value="PreATP-grasp domain"/>
    <property type="match status" value="1"/>
</dbReference>
<dbReference type="PROSITE" id="PS50975">
    <property type="entry name" value="ATP_GRASP"/>
    <property type="match status" value="1"/>
</dbReference>
<dbReference type="PROSITE" id="PS00843">
    <property type="entry name" value="DALA_DALA_LIGASE_1"/>
    <property type="match status" value="1"/>
</dbReference>
<dbReference type="PROSITE" id="PS00844">
    <property type="entry name" value="DALA_DALA_LIGASE_2"/>
    <property type="match status" value="1"/>
</dbReference>
<feature type="chain" id="PRO_1000074791" description="D-alanine--D-alanine ligase">
    <location>
        <begin position="1"/>
        <end position="337"/>
    </location>
</feature>
<feature type="domain" description="ATP-grasp" evidence="2">
    <location>
        <begin position="124"/>
        <end position="330"/>
    </location>
</feature>
<feature type="binding site" evidence="2">
    <location>
        <begin position="154"/>
        <end position="209"/>
    </location>
    <ligand>
        <name>ATP</name>
        <dbReference type="ChEBI" id="CHEBI:30616"/>
    </ligand>
</feature>
<feature type="binding site" evidence="2">
    <location>
        <position position="284"/>
    </location>
    <ligand>
        <name>Mg(2+)</name>
        <dbReference type="ChEBI" id="CHEBI:18420"/>
        <label>1</label>
    </ligand>
</feature>
<feature type="binding site" evidence="2">
    <location>
        <position position="297"/>
    </location>
    <ligand>
        <name>Mg(2+)</name>
        <dbReference type="ChEBI" id="CHEBI:18420"/>
        <label>1</label>
    </ligand>
</feature>
<feature type="binding site" evidence="2">
    <location>
        <position position="297"/>
    </location>
    <ligand>
        <name>Mg(2+)</name>
        <dbReference type="ChEBI" id="CHEBI:18420"/>
        <label>2</label>
    </ligand>
</feature>
<feature type="binding site" evidence="2">
    <location>
        <position position="299"/>
    </location>
    <ligand>
        <name>Mg(2+)</name>
        <dbReference type="ChEBI" id="CHEBI:18420"/>
        <label>2</label>
    </ligand>
</feature>
<gene>
    <name evidence="2" type="primary">ddl</name>
    <name type="ordered locus">Sputcn32_1801</name>
</gene>
<reference key="1">
    <citation type="submission" date="2007-04" db="EMBL/GenBank/DDBJ databases">
        <title>Complete sequence of Shewanella putrefaciens CN-32.</title>
        <authorList>
            <consortium name="US DOE Joint Genome Institute"/>
            <person name="Copeland A."/>
            <person name="Lucas S."/>
            <person name="Lapidus A."/>
            <person name="Barry K."/>
            <person name="Detter J.C."/>
            <person name="Glavina del Rio T."/>
            <person name="Hammon N."/>
            <person name="Israni S."/>
            <person name="Dalin E."/>
            <person name="Tice H."/>
            <person name="Pitluck S."/>
            <person name="Chain P."/>
            <person name="Malfatti S."/>
            <person name="Shin M."/>
            <person name="Vergez L."/>
            <person name="Schmutz J."/>
            <person name="Larimer F."/>
            <person name="Land M."/>
            <person name="Hauser L."/>
            <person name="Kyrpides N."/>
            <person name="Mikhailova N."/>
            <person name="Romine M.F."/>
            <person name="Fredrickson J."/>
            <person name="Tiedje J."/>
            <person name="Richardson P."/>
        </authorList>
    </citation>
    <scope>NUCLEOTIDE SEQUENCE [LARGE SCALE GENOMIC DNA]</scope>
    <source>
        <strain>CN-32 / ATCC BAA-453</strain>
    </source>
</reference>